<name>AROL_ECO45</name>
<comment type="function">
    <text evidence="1">Catalyzes the specific phosphorylation of the 3-hydroxyl group of shikimic acid using ATP as a cosubstrate.</text>
</comment>
<comment type="catalytic activity">
    <reaction evidence="1">
        <text>shikimate + ATP = 3-phosphoshikimate + ADP + H(+)</text>
        <dbReference type="Rhea" id="RHEA:13121"/>
        <dbReference type="ChEBI" id="CHEBI:15378"/>
        <dbReference type="ChEBI" id="CHEBI:30616"/>
        <dbReference type="ChEBI" id="CHEBI:36208"/>
        <dbReference type="ChEBI" id="CHEBI:145989"/>
        <dbReference type="ChEBI" id="CHEBI:456216"/>
        <dbReference type="EC" id="2.7.1.71"/>
    </reaction>
</comment>
<comment type="cofactor">
    <cofactor evidence="1">
        <name>Mg(2+)</name>
        <dbReference type="ChEBI" id="CHEBI:18420"/>
    </cofactor>
    <text evidence="1">Binds 1 Mg(2+) ion per subunit.</text>
</comment>
<comment type="pathway">
    <text evidence="1">Metabolic intermediate biosynthesis; chorismate biosynthesis; chorismate from D-erythrose 4-phosphate and phosphoenolpyruvate: step 5/7.</text>
</comment>
<comment type="subunit">
    <text evidence="1">Monomer.</text>
</comment>
<comment type="subcellular location">
    <subcellularLocation>
        <location evidence="1">Cytoplasm</location>
    </subcellularLocation>
</comment>
<comment type="domain">
    <text evidence="1">The LID domain closes over the active site upon ATP binding.</text>
</comment>
<comment type="similarity">
    <text evidence="1">Belongs to the shikimate kinase family. AroL subfamily.</text>
</comment>
<evidence type="ECO:0000255" key="1">
    <source>
        <dbReference type="HAMAP-Rule" id="MF_01269"/>
    </source>
</evidence>
<accession>B7MD47</accession>
<feature type="chain" id="PRO_1000140127" description="Shikimate kinase 2">
    <location>
        <begin position="1"/>
        <end position="174"/>
    </location>
</feature>
<feature type="region of interest" description="LID domain">
    <location>
        <begin position="112"/>
        <end position="126"/>
    </location>
</feature>
<feature type="binding site" evidence="1">
    <location>
        <begin position="12"/>
        <end position="17"/>
    </location>
    <ligand>
        <name>ATP</name>
        <dbReference type="ChEBI" id="CHEBI:30616"/>
    </ligand>
</feature>
<feature type="binding site" evidence="1">
    <location>
        <position position="16"/>
    </location>
    <ligand>
        <name>Mg(2+)</name>
        <dbReference type="ChEBI" id="CHEBI:18420"/>
    </ligand>
</feature>
<feature type="binding site" evidence="1">
    <location>
        <position position="32"/>
    </location>
    <ligand>
        <name>Mg(2+)</name>
        <dbReference type="ChEBI" id="CHEBI:18420"/>
    </ligand>
</feature>
<feature type="binding site" evidence="1">
    <location>
        <position position="34"/>
    </location>
    <ligand>
        <name>substrate</name>
    </ligand>
</feature>
<feature type="binding site" evidence="1">
    <location>
        <position position="58"/>
    </location>
    <ligand>
        <name>substrate</name>
    </ligand>
</feature>
<feature type="binding site" evidence="1">
    <location>
        <position position="79"/>
    </location>
    <ligand>
        <name>substrate</name>
    </ligand>
</feature>
<feature type="binding site" evidence="1">
    <location>
        <position position="120"/>
    </location>
    <ligand>
        <name>ATP</name>
        <dbReference type="ChEBI" id="CHEBI:30616"/>
    </ligand>
</feature>
<feature type="binding site" evidence="1">
    <location>
        <position position="139"/>
    </location>
    <ligand>
        <name>substrate</name>
    </ligand>
</feature>
<proteinExistence type="inferred from homology"/>
<protein>
    <recommendedName>
        <fullName evidence="1">Shikimate kinase 2</fullName>
        <shortName evidence="1">SK 2</shortName>
        <ecNumber evidence="1">2.7.1.71</ecNumber>
    </recommendedName>
</protein>
<organism>
    <name type="scientific">Escherichia coli O45:K1 (strain S88 / ExPEC)</name>
    <dbReference type="NCBI Taxonomy" id="585035"/>
    <lineage>
        <taxon>Bacteria</taxon>
        <taxon>Pseudomonadati</taxon>
        <taxon>Pseudomonadota</taxon>
        <taxon>Gammaproteobacteria</taxon>
        <taxon>Enterobacterales</taxon>
        <taxon>Enterobacteriaceae</taxon>
        <taxon>Escherichia</taxon>
    </lineage>
</organism>
<sequence length="174" mass="19136">MTQPLFLIGPRGCGKTTVGMALADSLNRRFVDTDLWLQSQLNMTVAEIVEREEWAGFRARETAALEAVTAPSTVIATGGGIILTEFNRHFMQNNGIVVYLCAPVSVLVNRLQAAPEEDLRPTLTGKPLSEEVQEVLEERDALYREVAHIIIDATNEPSQVISEIRSALAQTINC</sequence>
<keyword id="KW-0028">Amino-acid biosynthesis</keyword>
<keyword id="KW-0057">Aromatic amino acid biosynthesis</keyword>
<keyword id="KW-0067">ATP-binding</keyword>
<keyword id="KW-0963">Cytoplasm</keyword>
<keyword id="KW-0418">Kinase</keyword>
<keyword id="KW-0460">Magnesium</keyword>
<keyword id="KW-0479">Metal-binding</keyword>
<keyword id="KW-0547">Nucleotide-binding</keyword>
<keyword id="KW-1185">Reference proteome</keyword>
<keyword id="KW-0808">Transferase</keyword>
<gene>
    <name evidence="1" type="primary">aroL</name>
    <name type="ordered locus">ECS88_0383</name>
</gene>
<dbReference type="EC" id="2.7.1.71" evidence="1"/>
<dbReference type="EMBL" id="CU928161">
    <property type="protein sequence ID" value="CAR01732.1"/>
    <property type="molecule type" value="Genomic_DNA"/>
</dbReference>
<dbReference type="RefSeq" id="WP_000193383.1">
    <property type="nucleotide sequence ID" value="NC_011742.1"/>
</dbReference>
<dbReference type="SMR" id="B7MD47"/>
<dbReference type="KEGG" id="ecz:ECS88_0383"/>
<dbReference type="HOGENOM" id="CLU_057607_4_3_6"/>
<dbReference type="UniPathway" id="UPA00053">
    <property type="reaction ID" value="UER00088"/>
</dbReference>
<dbReference type="Proteomes" id="UP000000747">
    <property type="component" value="Chromosome"/>
</dbReference>
<dbReference type="GO" id="GO:0005829">
    <property type="term" value="C:cytosol"/>
    <property type="evidence" value="ECO:0007669"/>
    <property type="project" value="TreeGrafter"/>
</dbReference>
<dbReference type="GO" id="GO:0005524">
    <property type="term" value="F:ATP binding"/>
    <property type="evidence" value="ECO:0007669"/>
    <property type="project" value="UniProtKB-UniRule"/>
</dbReference>
<dbReference type="GO" id="GO:0000287">
    <property type="term" value="F:magnesium ion binding"/>
    <property type="evidence" value="ECO:0007669"/>
    <property type="project" value="UniProtKB-UniRule"/>
</dbReference>
<dbReference type="GO" id="GO:0004765">
    <property type="term" value="F:shikimate kinase activity"/>
    <property type="evidence" value="ECO:0007669"/>
    <property type="project" value="UniProtKB-UniRule"/>
</dbReference>
<dbReference type="GO" id="GO:0008652">
    <property type="term" value="P:amino acid biosynthetic process"/>
    <property type="evidence" value="ECO:0007669"/>
    <property type="project" value="UniProtKB-KW"/>
</dbReference>
<dbReference type="GO" id="GO:0009073">
    <property type="term" value="P:aromatic amino acid family biosynthetic process"/>
    <property type="evidence" value="ECO:0007669"/>
    <property type="project" value="UniProtKB-KW"/>
</dbReference>
<dbReference type="GO" id="GO:0009423">
    <property type="term" value="P:chorismate biosynthetic process"/>
    <property type="evidence" value="ECO:0007669"/>
    <property type="project" value="UniProtKB-UniRule"/>
</dbReference>
<dbReference type="CDD" id="cd00464">
    <property type="entry name" value="SK"/>
    <property type="match status" value="1"/>
</dbReference>
<dbReference type="FunFam" id="3.40.50.300:FF:000408">
    <property type="entry name" value="Shikimate kinase 2"/>
    <property type="match status" value="1"/>
</dbReference>
<dbReference type="Gene3D" id="3.40.50.300">
    <property type="entry name" value="P-loop containing nucleotide triphosphate hydrolases"/>
    <property type="match status" value="1"/>
</dbReference>
<dbReference type="HAMAP" id="MF_00109">
    <property type="entry name" value="Shikimate_kinase"/>
    <property type="match status" value="1"/>
</dbReference>
<dbReference type="HAMAP" id="MF_01269">
    <property type="entry name" value="Shikimate_kinase_2"/>
    <property type="match status" value="1"/>
</dbReference>
<dbReference type="InterPro" id="IPR027417">
    <property type="entry name" value="P-loop_NTPase"/>
</dbReference>
<dbReference type="InterPro" id="IPR031322">
    <property type="entry name" value="Shikimate/glucono_kinase"/>
</dbReference>
<dbReference type="InterPro" id="IPR000623">
    <property type="entry name" value="Shikimate_kinase/TSH1"/>
</dbReference>
<dbReference type="InterPro" id="IPR027544">
    <property type="entry name" value="Shikimate_kinase_2"/>
</dbReference>
<dbReference type="InterPro" id="IPR023000">
    <property type="entry name" value="Shikimate_kinase_CS"/>
</dbReference>
<dbReference type="NCBIfam" id="NF002988">
    <property type="entry name" value="PRK03731.1"/>
    <property type="match status" value="1"/>
</dbReference>
<dbReference type="PANTHER" id="PTHR21087">
    <property type="entry name" value="SHIKIMATE KINASE"/>
    <property type="match status" value="1"/>
</dbReference>
<dbReference type="PANTHER" id="PTHR21087:SF21">
    <property type="entry name" value="SHIKIMATE KINASE 2"/>
    <property type="match status" value="1"/>
</dbReference>
<dbReference type="Pfam" id="PF01202">
    <property type="entry name" value="SKI"/>
    <property type="match status" value="1"/>
</dbReference>
<dbReference type="PRINTS" id="PR01100">
    <property type="entry name" value="SHIKIMTKNASE"/>
</dbReference>
<dbReference type="SUPFAM" id="SSF52540">
    <property type="entry name" value="P-loop containing nucleoside triphosphate hydrolases"/>
    <property type="match status" value="1"/>
</dbReference>
<dbReference type="PROSITE" id="PS01128">
    <property type="entry name" value="SHIKIMATE_KINASE"/>
    <property type="match status" value="1"/>
</dbReference>
<reference key="1">
    <citation type="journal article" date="2009" name="PLoS Genet.">
        <title>Organised genome dynamics in the Escherichia coli species results in highly diverse adaptive paths.</title>
        <authorList>
            <person name="Touchon M."/>
            <person name="Hoede C."/>
            <person name="Tenaillon O."/>
            <person name="Barbe V."/>
            <person name="Baeriswyl S."/>
            <person name="Bidet P."/>
            <person name="Bingen E."/>
            <person name="Bonacorsi S."/>
            <person name="Bouchier C."/>
            <person name="Bouvet O."/>
            <person name="Calteau A."/>
            <person name="Chiapello H."/>
            <person name="Clermont O."/>
            <person name="Cruveiller S."/>
            <person name="Danchin A."/>
            <person name="Diard M."/>
            <person name="Dossat C."/>
            <person name="Karoui M.E."/>
            <person name="Frapy E."/>
            <person name="Garry L."/>
            <person name="Ghigo J.M."/>
            <person name="Gilles A.M."/>
            <person name="Johnson J."/>
            <person name="Le Bouguenec C."/>
            <person name="Lescat M."/>
            <person name="Mangenot S."/>
            <person name="Martinez-Jehanne V."/>
            <person name="Matic I."/>
            <person name="Nassif X."/>
            <person name="Oztas S."/>
            <person name="Petit M.A."/>
            <person name="Pichon C."/>
            <person name="Rouy Z."/>
            <person name="Ruf C.S."/>
            <person name="Schneider D."/>
            <person name="Tourret J."/>
            <person name="Vacherie B."/>
            <person name="Vallenet D."/>
            <person name="Medigue C."/>
            <person name="Rocha E.P.C."/>
            <person name="Denamur E."/>
        </authorList>
    </citation>
    <scope>NUCLEOTIDE SEQUENCE [LARGE SCALE GENOMIC DNA]</scope>
    <source>
        <strain>S88 / ExPEC</strain>
    </source>
</reference>